<comment type="function">
    <text>Core component of nucleosome. Nucleosomes wrap and compact DNA into chromatin, limiting DNA accessibility to the cellular machineries which require DNA as a template. Histones thereby play a central role in transcription regulation, DNA repair, DNA replication and chromosomal stability. DNA accessibility is regulated via a complex set of post-translational modifications of histones, also called histone code, and nucleosome remodeling.</text>
</comment>
<comment type="subunit">
    <text>The nucleosome is a histone octamer containing two molecules each of H2A, H2B, H3 and H4 assembled in one H3-H4 heterotetramer and two H2A-H2B heterodimers. The octamer wraps approximately 147 bp of DNA.</text>
</comment>
<comment type="subcellular location">
    <subcellularLocation>
        <location evidence="1">Nucleus</location>
    </subcellularLocation>
    <subcellularLocation>
        <location evidence="1">Chromosome</location>
    </subcellularLocation>
</comment>
<comment type="PTM">
    <text evidence="1">Phosphorylated to form H3S10ph. H3S10ph promotes subsequent H3K14ac formation and is required for transcriptional activation through TBP recruitment to the promoters (By similarity).</text>
</comment>
<comment type="PTM">
    <text evidence="1">Mono-, di- and trimethylated by the COMPASS complex to form H3K4me1/2/3. H3K4me activates gene expression by regulating transcription elongation and plays a role in telomere length maintenance. H3K4me enrichment correlates with transcription levels, and occurs in a 5' to 3' gradient with H3K4me3 enrichment at the 5'-end of genes, shifting to H3K4me2 and then H3K4me1. Methylated by SET2 to form H3K36me. H3K36me represses gene expression. Methylated by DOT1 to form H3K79me. H3K79me is required for association of SIR proteins with telomeric regions and for telomeric silencing. The COMPASS-mediated formation of H3K4me2/3 and the DOT1-mediated formation of H3K79me require H2BK123ub1 (By similarity).</text>
</comment>
<comment type="PTM">
    <text evidence="1">Acetylation of histone H3 leads to transcriptional activation. H3K14ac formation by GCN5 is promoted by H3S10ph. H3K14ac can also be formed by ESA1. H3K56ac formation occurs predominantly in newly synthesized H3 molecules during G1, S and G2/M of the cell cycle and may be involved in DNA repair (By similarity).</text>
</comment>
<comment type="similarity">
    <text evidence="3">Belongs to the histone H3 family.</text>
</comment>
<comment type="caution">
    <text evidence="3">To ensure consistency between histone entries, we follow the 'Brno' nomenclature for histone modifications, with positions referring to those used in the literature for the 'closest' model organism. Due to slight variations in histone sequences between organisms and to the presence of initiator methionine in UniProtKB/Swiss-Prot sequences, the actual positions of modified amino acids in the sequence generally differ. In this entry the following conventions are used: H3K4me1/2/3 = mono-, di- and trimethylated Lys-5; H3K9ac = acetylated Lys-10; H3K9me1 = monomethylated Lys-10; H3S10ph = phosphorylated Ser-11; H3K14ac = acetylated Lys-15; H3K14me2 = dimethylated Lys-15; H3K18ac = acetylated Lys-19; H3K18me1 = monomethylated Lys-19; H3K23ac = acetylated Lys-24; H3K23me1 = monomethylated Lys-24; H3K27ac = acetylated Lys-28; H3K27me1/2/3 = mono-, di- and trimethylated Lys-28; H3K36ac = acetylated Lys-37; H3K36me1/2/3 = mono-, di- and trimethylated Lys-37; H3K56ac = acetylated Lys-57; H3K64ac = acetylated Lys-65; H3K79me1/2/3 = mono-, di- and trimethylated Lys-80.</text>
</comment>
<accession>A5DWE2</accession>
<proteinExistence type="inferred from homology"/>
<protein>
    <recommendedName>
        <fullName>Histone H3.1/H3.2</fullName>
    </recommendedName>
</protein>
<reference key="1">
    <citation type="journal article" date="2009" name="Nature">
        <title>Evolution of pathogenicity and sexual reproduction in eight Candida genomes.</title>
        <authorList>
            <person name="Butler G."/>
            <person name="Rasmussen M.D."/>
            <person name="Lin M.F."/>
            <person name="Santos M.A.S."/>
            <person name="Sakthikumar S."/>
            <person name="Munro C.A."/>
            <person name="Rheinbay E."/>
            <person name="Grabherr M."/>
            <person name="Forche A."/>
            <person name="Reedy J.L."/>
            <person name="Agrafioti I."/>
            <person name="Arnaud M.B."/>
            <person name="Bates S."/>
            <person name="Brown A.J.P."/>
            <person name="Brunke S."/>
            <person name="Costanzo M.C."/>
            <person name="Fitzpatrick D.A."/>
            <person name="de Groot P.W.J."/>
            <person name="Harris D."/>
            <person name="Hoyer L.L."/>
            <person name="Hube B."/>
            <person name="Klis F.M."/>
            <person name="Kodira C."/>
            <person name="Lennard N."/>
            <person name="Logue M.E."/>
            <person name="Martin R."/>
            <person name="Neiman A.M."/>
            <person name="Nikolaou E."/>
            <person name="Quail M.A."/>
            <person name="Quinn J."/>
            <person name="Santos M.C."/>
            <person name="Schmitzberger F.F."/>
            <person name="Sherlock G."/>
            <person name="Shah P."/>
            <person name="Silverstein K.A.T."/>
            <person name="Skrzypek M.S."/>
            <person name="Soll D."/>
            <person name="Staggs R."/>
            <person name="Stansfield I."/>
            <person name="Stumpf M.P.H."/>
            <person name="Sudbery P.E."/>
            <person name="Srikantha T."/>
            <person name="Zeng Q."/>
            <person name="Berman J."/>
            <person name="Berriman M."/>
            <person name="Heitman J."/>
            <person name="Gow N.A.R."/>
            <person name="Lorenz M.C."/>
            <person name="Birren B.W."/>
            <person name="Kellis M."/>
            <person name="Cuomo C.A."/>
        </authorList>
    </citation>
    <scope>NUCLEOTIDE SEQUENCE [LARGE SCALE GENOMIC DNA]</scope>
    <source>
        <strain>ATCC 11503 / BCRC 21390 / CBS 2605 / JCM 1781 / NBRC 1676 / NRRL YB-4239</strain>
    </source>
</reference>
<keyword id="KW-0007">Acetylation</keyword>
<keyword id="KW-0158">Chromosome</keyword>
<keyword id="KW-0238">DNA-binding</keyword>
<keyword id="KW-0488">Methylation</keyword>
<keyword id="KW-0544">Nucleosome core</keyword>
<keyword id="KW-0539">Nucleus</keyword>
<keyword id="KW-0597">Phosphoprotein</keyword>
<keyword id="KW-1185">Reference proteome</keyword>
<organism>
    <name type="scientific">Lodderomyces elongisporus (strain ATCC 11503 / CBS 2605 / JCM 1781 / NBRC 1676 / NRRL YB-4239)</name>
    <name type="common">Yeast</name>
    <name type="synonym">Saccharomyces elongisporus</name>
    <dbReference type="NCBI Taxonomy" id="379508"/>
    <lineage>
        <taxon>Eukaryota</taxon>
        <taxon>Fungi</taxon>
        <taxon>Dikarya</taxon>
        <taxon>Ascomycota</taxon>
        <taxon>Saccharomycotina</taxon>
        <taxon>Pichiomycetes</taxon>
        <taxon>Debaryomycetaceae</taxon>
        <taxon>Candida/Lodderomyces clade</taxon>
        <taxon>Lodderomyces</taxon>
    </lineage>
</organism>
<dbReference type="EMBL" id="CH981525">
    <property type="protein sequence ID" value="EDK43500.1"/>
    <property type="molecule type" value="Genomic_DNA"/>
</dbReference>
<dbReference type="EMBL" id="CH981527">
    <property type="protein sequence ID" value="EDK45268.1"/>
    <property type="molecule type" value="Genomic_DNA"/>
</dbReference>
<dbReference type="SMR" id="A5DWE2"/>
<dbReference type="FunCoup" id="A5DWE2">
    <property type="interactions" value="864"/>
</dbReference>
<dbReference type="STRING" id="379508.A5DWE2"/>
<dbReference type="GeneID" id="5232866"/>
<dbReference type="GeneID" id="5234415"/>
<dbReference type="KEGG" id="lel:PVL30_001651"/>
<dbReference type="KEGG" id="lel:PVL30_002937"/>
<dbReference type="VEuPathDB" id="FungiDB:LELG_01678"/>
<dbReference type="VEuPathDB" id="FungiDB:LELG_03447"/>
<dbReference type="eggNOG" id="KOG1745">
    <property type="taxonomic scope" value="Eukaryota"/>
</dbReference>
<dbReference type="HOGENOM" id="CLU_078295_4_0_1"/>
<dbReference type="InParanoid" id="A5DWE2"/>
<dbReference type="OMA" id="HIFAEMA"/>
<dbReference type="OrthoDB" id="5326060at2759"/>
<dbReference type="Proteomes" id="UP000001996">
    <property type="component" value="Unassembled WGS sequence"/>
</dbReference>
<dbReference type="GO" id="GO:0000786">
    <property type="term" value="C:nucleosome"/>
    <property type="evidence" value="ECO:0007669"/>
    <property type="project" value="UniProtKB-KW"/>
</dbReference>
<dbReference type="GO" id="GO:0005634">
    <property type="term" value="C:nucleus"/>
    <property type="evidence" value="ECO:0007669"/>
    <property type="project" value="UniProtKB-SubCell"/>
</dbReference>
<dbReference type="GO" id="GO:0003677">
    <property type="term" value="F:DNA binding"/>
    <property type="evidence" value="ECO:0007669"/>
    <property type="project" value="UniProtKB-KW"/>
</dbReference>
<dbReference type="GO" id="GO:0046982">
    <property type="term" value="F:protein heterodimerization activity"/>
    <property type="evidence" value="ECO:0007669"/>
    <property type="project" value="InterPro"/>
</dbReference>
<dbReference type="GO" id="GO:0030527">
    <property type="term" value="F:structural constituent of chromatin"/>
    <property type="evidence" value="ECO:0007669"/>
    <property type="project" value="InterPro"/>
</dbReference>
<dbReference type="CDD" id="cd22911">
    <property type="entry name" value="HFD_H3"/>
    <property type="match status" value="1"/>
</dbReference>
<dbReference type="FunFam" id="1.10.20.10:FF:000010">
    <property type="entry name" value="Histone H3"/>
    <property type="match status" value="1"/>
</dbReference>
<dbReference type="Gene3D" id="1.10.20.10">
    <property type="entry name" value="Histone, subunit A"/>
    <property type="match status" value="1"/>
</dbReference>
<dbReference type="InterPro" id="IPR009072">
    <property type="entry name" value="Histone-fold"/>
</dbReference>
<dbReference type="InterPro" id="IPR007125">
    <property type="entry name" value="Histone_H2A/H2B/H3"/>
</dbReference>
<dbReference type="InterPro" id="IPR000164">
    <property type="entry name" value="Histone_H3/CENP-A"/>
</dbReference>
<dbReference type="PANTHER" id="PTHR11426">
    <property type="entry name" value="HISTONE H3"/>
    <property type="match status" value="1"/>
</dbReference>
<dbReference type="Pfam" id="PF00125">
    <property type="entry name" value="Histone"/>
    <property type="match status" value="1"/>
</dbReference>
<dbReference type="PRINTS" id="PR00622">
    <property type="entry name" value="HISTONEH3"/>
</dbReference>
<dbReference type="SMART" id="SM00428">
    <property type="entry name" value="H3"/>
    <property type="match status" value="1"/>
</dbReference>
<dbReference type="SUPFAM" id="SSF47113">
    <property type="entry name" value="Histone-fold"/>
    <property type="match status" value="1"/>
</dbReference>
<dbReference type="PROSITE" id="PS00322">
    <property type="entry name" value="HISTONE_H3_1"/>
    <property type="match status" value="1"/>
</dbReference>
<dbReference type="PROSITE" id="PS00959">
    <property type="entry name" value="HISTONE_H3_2"/>
    <property type="match status" value="1"/>
</dbReference>
<evidence type="ECO:0000250" key="1"/>
<evidence type="ECO:0000256" key="2">
    <source>
        <dbReference type="SAM" id="MobiDB-lite"/>
    </source>
</evidence>
<evidence type="ECO:0000305" key="3"/>
<name>H31_LODEL</name>
<feature type="initiator methionine" description="Removed" evidence="1">
    <location>
        <position position="1"/>
    </location>
</feature>
<feature type="chain" id="PRO_0000297746" description="Histone H3.1/H3.2">
    <location>
        <begin position="2"/>
        <end position="136"/>
    </location>
</feature>
<feature type="region of interest" description="Disordered" evidence="2">
    <location>
        <begin position="1"/>
        <end position="43"/>
    </location>
</feature>
<feature type="modified residue" description="N6,N6,N6-trimethyllysine; alternate" evidence="1">
    <location>
        <position position="5"/>
    </location>
</feature>
<feature type="modified residue" description="N6,N6-dimethyllysine; alternate" evidence="1">
    <location>
        <position position="5"/>
    </location>
</feature>
<feature type="modified residue" description="N6-methyllysine; alternate" evidence="1">
    <location>
        <position position="5"/>
    </location>
</feature>
<feature type="modified residue" description="N6-acetyllysine; alternate" evidence="1">
    <location>
        <position position="10"/>
    </location>
</feature>
<feature type="modified residue" description="N6-methyllysine; alternate" evidence="1">
    <location>
        <position position="10"/>
    </location>
</feature>
<feature type="modified residue" description="Phosphoserine" evidence="1">
    <location>
        <position position="11"/>
    </location>
</feature>
<feature type="modified residue" description="N6,N6-dimethyllysine; alternate" evidence="1">
    <location>
        <position position="15"/>
    </location>
</feature>
<feature type="modified residue" description="N6-acetyllysine; alternate" evidence="1">
    <location>
        <position position="15"/>
    </location>
</feature>
<feature type="modified residue" description="N6-acetyllysine; alternate" evidence="1">
    <location>
        <position position="19"/>
    </location>
</feature>
<feature type="modified residue" description="N6-methyllysine; alternate" evidence="1">
    <location>
        <position position="19"/>
    </location>
</feature>
<feature type="modified residue" description="N6-acetyllysine; alternate" evidence="1">
    <location>
        <position position="24"/>
    </location>
</feature>
<feature type="modified residue" description="N6-methyllysine; alternate" evidence="1">
    <location>
        <position position="24"/>
    </location>
</feature>
<feature type="modified residue" description="N6,N6,N6-trimethyllysine; alternate" evidence="1">
    <location>
        <position position="28"/>
    </location>
</feature>
<feature type="modified residue" description="N6,N6-dimethyllysine; alternate" evidence="1">
    <location>
        <position position="28"/>
    </location>
</feature>
<feature type="modified residue" description="N6-acetyllysine; alternate" evidence="1">
    <location>
        <position position="28"/>
    </location>
</feature>
<feature type="modified residue" description="N6-methyllysine; alternate" evidence="1">
    <location>
        <position position="28"/>
    </location>
</feature>
<feature type="modified residue" description="N6,N6,N6-trimethyllysine; alternate" evidence="1">
    <location>
        <position position="37"/>
    </location>
</feature>
<feature type="modified residue" description="N6,N6-dimethyllysine; alternate" evidence="1">
    <location>
        <position position="37"/>
    </location>
</feature>
<feature type="modified residue" description="N6-acetyllysine; alternate" evidence="1">
    <location>
        <position position="37"/>
    </location>
</feature>
<feature type="modified residue" description="N6-methyllysine; alternate" evidence="1">
    <location>
        <position position="37"/>
    </location>
</feature>
<feature type="modified residue" description="N6-acetyllysine" evidence="1">
    <location>
        <position position="57"/>
    </location>
</feature>
<feature type="modified residue" description="N6-acetyllysine" evidence="1">
    <location>
        <position position="65"/>
    </location>
</feature>
<feature type="modified residue" description="N6,N6,N6-trimethyllysine; alternate" evidence="1">
    <location>
        <position position="80"/>
    </location>
</feature>
<feature type="modified residue" description="N6,N6-dimethyllysine; alternate" evidence="1">
    <location>
        <position position="80"/>
    </location>
</feature>
<feature type="modified residue" description="N6-methyllysine; alternate" evidence="1">
    <location>
        <position position="80"/>
    </location>
</feature>
<sequence>MARTKQTARKSTGGKAPRKQLASKAARKSAPSTGGVKKPHRYKPGTVALREIRRFQKSTELLIRKLPFQRLVREIAQDFKTDLRFQSSAIGALQEAVEAYLVGLFEDTNLCAIHAKRVTIQKKDIQLARRLRGERS</sequence>
<gene>
    <name type="primary">HHT1</name>
    <name type="ORF">LELG_01678</name>
</gene>
<gene>
    <name type="primary">HHT2</name>
    <name type="ORF">LELG_03447</name>
</gene>